<gene>
    <name evidence="1" type="primary">ilvC</name>
    <name type="ordered locus">NIS_1161</name>
</gene>
<proteinExistence type="inferred from homology"/>
<keyword id="KW-0028">Amino-acid biosynthesis</keyword>
<keyword id="KW-0100">Branched-chain amino acid biosynthesis</keyword>
<keyword id="KW-0460">Magnesium</keyword>
<keyword id="KW-0479">Metal-binding</keyword>
<keyword id="KW-0521">NADP</keyword>
<keyword id="KW-0560">Oxidoreductase</keyword>
<keyword id="KW-1185">Reference proteome</keyword>
<comment type="function">
    <text evidence="1">Involved in the biosynthesis of branched-chain amino acids (BCAA). Catalyzes an alkyl-migration followed by a ketol-acid reduction of (S)-2-acetolactate (S2AL) to yield (R)-2,3-dihydroxy-isovalerate. In the isomerase reaction, S2AL is rearranged via a Mg-dependent methyl migration to produce 3-hydroxy-3-methyl-2-ketobutyrate (HMKB). In the reductase reaction, this 2-ketoacid undergoes a metal-dependent reduction by NADPH to yield (R)-2,3-dihydroxy-isovalerate.</text>
</comment>
<comment type="catalytic activity">
    <reaction evidence="1">
        <text>(2R)-2,3-dihydroxy-3-methylbutanoate + NADP(+) = (2S)-2-acetolactate + NADPH + H(+)</text>
        <dbReference type="Rhea" id="RHEA:22068"/>
        <dbReference type="ChEBI" id="CHEBI:15378"/>
        <dbReference type="ChEBI" id="CHEBI:49072"/>
        <dbReference type="ChEBI" id="CHEBI:57783"/>
        <dbReference type="ChEBI" id="CHEBI:58349"/>
        <dbReference type="ChEBI" id="CHEBI:58476"/>
        <dbReference type="EC" id="1.1.1.86"/>
    </reaction>
</comment>
<comment type="catalytic activity">
    <reaction evidence="1">
        <text>(2R,3R)-2,3-dihydroxy-3-methylpentanoate + NADP(+) = (S)-2-ethyl-2-hydroxy-3-oxobutanoate + NADPH + H(+)</text>
        <dbReference type="Rhea" id="RHEA:13493"/>
        <dbReference type="ChEBI" id="CHEBI:15378"/>
        <dbReference type="ChEBI" id="CHEBI:49256"/>
        <dbReference type="ChEBI" id="CHEBI:49258"/>
        <dbReference type="ChEBI" id="CHEBI:57783"/>
        <dbReference type="ChEBI" id="CHEBI:58349"/>
        <dbReference type="EC" id="1.1.1.86"/>
    </reaction>
</comment>
<comment type="cofactor">
    <cofactor evidence="1">
        <name>Mg(2+)</name>
        <dbReference type="ChEBI" id="CHEBI:18420"/>
    </cofactor>
    <text evidence="1">Binds 2 magnesium ions per subunit.</text>
</comment>
<comment type="pathway">
    <text evidence="1">Amino-acid biosynthesis; L-isoleucine biosynthesis; L-isoleucine from 2-oxobutanoate: step 2/4.</text>
</comment>
<comment type="pathway">
    <text evidence="1">Amino-acid biosynthesis; L-valine biosynthesis; L-valine from pyruvate: step 2/4.</text>
</comment>
<comment type="similarity">
    <text evidence="1">Belongs to the ketol-acid reductoisomerase family.</text>
</comment>
<sequence length="340" mass="37441">MALPIYYDKDCDINLIKSKKVAIIGFGSQGHAHAENLRDSGVEVKIGLYPGGRSWKKAEAKGFDVLEVADASEWADVVMILIPDEIQSEVYYRDIEPNLKESDTIAFGHGFNIHYGRIKPRADINVMMVAPKAPGHTVRSEFVKGGGIPDLIAVAQDPSGNTLELAKSYASAIGGGRTGIIHTTFKDETETDLFGEQAVLCGGVSALIQAGFETLTEAGYPEEMAYFECLHELKLIVDLIYEGGLANMRYSISNTAEYGDYVSGPRVINEASRQAMKDILKEIQNGKFAKDFILEGMAGYPRMTAERRNCEAHPIEQVGKRLRAMMPWITANKIVDQEKN</sequence>
<feature type="chain" id="PRO_1000060231" description="Ketol-acid reductoisomerase (NADP(+))">
    <location>
        <begin position="1"/>
        <end position="340"/>
    </location>
</feature>
<feature type="domain" description="KARI N-terminal Rossmann" evidence="2">
    <location>
        <begin position="3"/>
        <end position="183"/>
    </location>
</feature>
<feature type="domain" description="KARI C-terminal knotted" evidence="3">
    <location>
        <begin position="184"/>
        <end position="329"/>
    </location>
</feature>
<feature type="active site" evidence="1">
    <location>
        <position position="109"/>
    </location>
</feature>
<feature type="binding site" evidence="1">
    <location>
        <begin position="26"/>
        <end position="29"/>
    </location>
    <ligand>
        <name>NADP(+)</name>
        <dbReference type="ChEBI" id="CHEBI:58349"/>
    </ligand>
</feature>
<feature type="binding site" evidence="1">
    <location>
        <position position="54"/>
    </location>
    <ligand>
        <name>NADP(+)</name>
        <dbReference type="ChEBI" id="CHEBI:58349"/>
    </ligand>
</feature>
<feature type="binding site" evidence="1">
    <location>
        <begin position="84"/>
        <end position="87"/>
    </location>
    <ligand>
        <name>NADP(+)</name>
        <dbReference type="ChEBI" id="CHEBI:58349"/>
    </ligand>
</feature>
<feature type="binding site" evidence="1">
    <location>
        <position position="135"/>
    </location>
    <ligand>
        <name>NADP(+)</name>
        <dbReference type="ChEBI" id="CHEBI:58349"/>
    </ligand>
</feature>
<feature type="binding site" evidence="1">
    <location>
        <position position="192"/>
    </location>
    <ligand>
        <name>Mg(2+)</name>
        <dbReference type="ChEBI" id="CHEBI:18420"/>
        <label>1</label>
    </ligand>
</feature>
<feature type="binding site" evidence="1">
    <location>
        <position position="192"/>
    </location>
    <ligand>
        <name>Mg(2+)</name>
        <dbReference type="ChEBI" id="CHEBI:18420"/>
        <label>2</label>
    </ligand>
</feature>
<feature type="binding site" evidence="1">
    <location>
        <position position="196"/>
    </location>
    <ligand>
        <name>Mg(2+)</name>
        <dbReference type="ChEBI" id="CHEBI:18420"/>
        <label>1</label>
    </ligand>
</feature>
<feature type="binding site" evidence="1">
    <location>
        <position position="228"/>
    </location>
    <ligand>
        <name>Mg(2+)</name>
        <dbReference type="ChEBI" id="CHEBI:18420"/>
        <label>2</label>
    </ligand>
</feature>
<feature type="binding site" evidence="1">
    <location>
        <position position="232"/>
    </location>
    <ligand>
        <name>Mg(2+)</name>
        <dbReference type="ChEBI" id="CHEBI:18420"/>
        <label>2</label>
    </ligand>
</feature>
<feature type="binding site" evidence="1">
    <location>
        <position position="253"/>
    </location>
    <ligand>
        <name>substrate</name>
    </ligand>
</feature>
<reference key="1">
    <citation type="journal article" date="2007" name="Proc. Natl. Acad. Sci. U.S.A.">
        <title>Deep-sea vent epsilon-proteobacterial genomes provide insights into emergence of pathogens.</title>
        <authorList>
            <person name="Nakagawa S."/>
            <person name="Takaki Y."/>
            <person name="Shimamura S."/>
            <person name="Reysenbach A.-L."/>
            <person name="Takai K."/>
            <person name="Horikoshi K."/>
        </authorList>
    </citation>
    <scope>NUCLEOTIDE SEQUENCE [LARGE SCALE GENOMIC DNA]</scope>
    <source>
        <strain>SB155-2</strain>
    </source>
</reference>
<protein>
    <recommendedName>
        <fullName evidence="1">Ketol-acid reductoisomerase (NADP(+))</fullName>
        <shortName evidence="1">KARI</shortName>
        <ecNumber evidence="1">1.1.1.86</ecNumber>
    </recommendedName>
    <alternativeName>
        <fullName evidence="1">Acetohydroxy-acid isomeroreductase</fullName>
        <shortName evidence="1">AHIR</shortName>
    </alternativeName>
    <alternativeName>
        <fullName evidence="1">Alpha-keto-beta-hydroxylacyl reductoisomerase</fullName>
    </alternativeName>
    <alternativeName>
        <fullName evidence="1">Ketol-acid reductoisomerase type 1</fullName>
    </alternativeName>
    <alternativeName>
        <fullName evidence="1">Ketol-acid reductoisomerase type I</fullName>
    </alternativeName>
</protein>
<accession>A6Q461</accession>
<evidence type="ECO:0000255" key="1">
    <source>
        <dbReference type="HAMAP-Rule" id="MF_00435"/>
    </source>
</evidence>
<evidence type="ECO:0000255" key="2">
    <source>
        <dbReference type="PROSITE-ProRule" id="PRU01197"/>
    </source>
</evidence>
<evidence type="ECO:0000255" key="3">
    <source>
        <dbReference type="PROSITE-ProRule" id="PRU01198"/>
    </source>
</evidence>
<dbReference type="EC" id="1.1.1.86" evidence="1"/>
<dbReference type="EMBL" id="AP009178">
    <property type="protein sequence ID" value="BAF70270.1"/>
    <property type="molecule type" value="Genomic_DNA"/>
</dbReference>
<dbReference type="RefSeq" id="WP_012082533.1">
    <property type="nucleotide sequence ID" value="NC_009662.1"/>
</dbReference>
<dbReference type="SMR" id="A6Q461"/>
<dbReference type="FunCoup" id="A6Q461">
    <property type="interactions" value="435"/>
</dbReference>
<dbReference type="STRING" id="387092.NIS_1161"/>
<dbReference type="KEGG" id="nis:NIS_1161"/>
<dbReference type="eggNOG" id="COG0059">
    <property type="taxonomic scope" value="Bacteria"/>
</dbReference>
<dbReference type="HOGENOM" id="CLU_033821_0_1_7"/>
<dbReference type="InParanoid" id="A6Q461"/>
<dbReference type="OrthoDB" id="9804088at2"/>
<dbReference type="UniPathway" id="UPA00047">
    <property type="reaction ID" value="UER00056"/>
</dbReference>
<dbReference type="UniPathway" id="UPA00049">
    <property type="reaction ID" value="UER00060"/>
</dbReference>
<dbReference type="Proteomes" id="UP000001118">
    <property type="component" value="Chromosome"/>
</dbReference>
<dbReference type="GO" id="GO:0005829">
    <property type="term" value="C:cytosol"/>
    <property type="evidence" value="ECO:0007669"/>
    <property type="project" value="TreeGrafter"/>
</dbReference>
<dbReference type="GO" id="GO:0004455">
    <property type="term" value="F:ketol-acid reductoisomerase activity"/>
    <property type="evidence" value="ECO:0007669"/>
    <property type="project" value="UniProtKB-UniRule"/>
</dbReference>
<dbReference type="GO" id="GO:0000287">
    <property type="term" value="F:magnesium ion binding"/>
    <property type="evidence" value="ECO:0007669"/>
    <property type="project" value="UniProtKB-UniRule"/>
</dbReference>
<dbReference type="GO" id="GO:0050661">
    <property type="term" value="F:NADP binding"/>
    <property type="evidence" value="ECO:0007669"/>
    <property type="project" value="InterPro"/>
</dbReference>
<dbReference type="GO" id="GO:0009097">
    <property type="term" value="P:isoleucine biosynthetic process"/>
    <property type="evidence" value="ECO:0007669"/>
    <property type="project" value="UniProtKB-UniRule"/>
</dbReference>
<dbReference type="GO" id="GO:0009099">
    <property type="term" value="P:L-valine biosynthetic process"/>
    <property type="evidence" value="ECO:0007669"/>
    <property type="project" value="UniProtKB-UniRule"/>
</dbReference>
<dbReference type="FunFam" id="3.40.50.720:FF:000023">
    <property type="entry name" value="Ketol-acid reductoisomerase (NADP(+))"/>
    <property type="match status" value="1"/>
</dbReference>
<dbReference type="Gene3D" id="6.10.240.10">
    <property type="match status" value="1"/>
</dbReference>
<dbReference type="Gene3D" id="3.40.50.720">
    <property type="entry name" value="NAD(P)-binding Rossmann-like Domain"/>
    <property type="match status" value="1"/>
</dbReference>
<dbReference type="HAMAP" id="MF_00435">
    <property type="entry name" value="IlvC"/>
    <property type="match status" value="1"/>
</dbReference>
<dbReference type="InterPro" id="IPR008927">
    <property type="entry name" value="6-PGluconate_DH-like_C_sf"/>
</dbReference>
<dbReference type="InterPro" id="IPR013023">
    <property type="entry name" value="KARI"/>
</dbReference>
<dbReference type="InterPro" id="IPR000506">
    <property type="entry name" value="KARI_C"/>
</dbReference>
<dbReference type="InterPro" id="IPR013116">
    <property type="entry name" value="KARI_N"/>
</dbReference>
<dbReference type="InterPro" id="IPR014359">
    <property type="entry name" value="KARI_prok"/>
</dbReference>
<dbReference type="InterPro" id="IPR036291">
    <property type="entry name" value="NAD(P)-bd_dom_sf"/>
</dbReference>
<dbReference type="NCBIfam" id="TIGR00465">
    <property type="entry name" value="ilvC"/>
    <property type="match status" value="1"/>
</dbReference>
<dbReference type="NCBIfam" id="NF004017">
    <property type="entry name" value="PRK05479.1"/>
    <property type="match status" value="1"/>
</dbReference>
<dbReference type="NCBIfam" id="NF009940">
    <property type="entry name" value="PRK13403.1"/>
    <property type="match status" value="1"/>
</dbReference>
<dbReference type="PANTHER" id="PTHR21371">
    <property type="entry name" value="KETOL-ACID REDUCTOISOMERASE, MITOCHONDRIAL"/>
    <property type="match status" value="1"/>
</dbReference>
<dbReference type="PANTHER" id="PTHR21371:SF1">
    <property type="entry name" value="KETOL-ACID REDUCTOISOMERASE, MITOCHONDRIAL"/>
    <property type="match status" value="1"/>
</dbReference>
<dbReference type="Pfam" id="PF01450">
    <property type="entry name" value="KARI_C"/>
    <property type="match status" value="1"/>
</dbReference>
<dbReference type="Pfam" id="PF07991">
    <property type="entry name" value="KARI_N"/>
    <property type="match status" value="1"/>
</dbReference>
<dbReference type="PIRSF" id="PIRSF000116">
    <property type="entry name" value="IlvC_gammaproteo"/>
    <property type="match status" value="1"/>
</dbReference>
<dbReference type="SUPFAM" id="SSF48179">
    <property type="entry name" value="6-phosphogluconate dehydrogenase C-terminal domain-like"/>
    <property type="match status" value="1"/>
</dbReference>
<dbReference type="SUPFAM" id="SSF51735">
    <property type="entry name" value="NAD(P)-binding Rossmann-fold domains"/>
    <property type="match status" value="1"/>
</dbReference>
<dbReference type="PROSITE" id="PS51851">
    <property type="entry name" value="KARI_C"/>
    <property type="match status" value="1"/>
</dbReference>
<dbReference type="PROSITE" id="PS51850">
    <property type="entry name" value="KARI_N"/>
    <property type="match status" value="1"/>
</dbReference>
<organism>
    <name type="scientific">Nitratiruptor sp. (strain SB155-2)</name>
    <dbReference type="NCBI Taxonomy" id="387092"/>
    <lineage>
        <taxon>Bacteria</taxon>
        <taxon>Pseudomonadati</taxon>
        <taxon>Campylobacterota</taxon>
        <taxon>Epsilonproteobacteria</taxon>
        <taxon>Nautiliales</taxon>
        <taxon>Nitratiruptoraceae</taxon>
        <taxon>Nitratiruptor</taxon>
    </lineage>
</organism>
<name>ILVC_NITSB</name>